<evidence type="ECO:0000255" key="1">
    <source>
        <dbReference type="HAMAP-Rule" id="MF_01040"/>
    </source>
</evidence>
<protein>
    <recommendedName>
        <fullName evidence="1">Probable phosphoglycerate mutase GpmB</fullName>
        <ecNumber evidence="1">5.4.2.-</ecNumber>
    </recommendedName>
    <alternativeName>
        <fullName evidence="1">PGAM</fullName>
    </alternativeName>
    <alternativeName>
        <fullName evidence="1">Phosphoglyceromutase</fullName>
    </alternativeName>
</protein>
<comment type="catalytic activity">
    <reaction evidence="1">
        <text>(2R)-2-phosphoglycerate = (2R)-3-phosphoglycerate</text>
        <dbReference type="Rhea" id="RHEA:15901"/>
        <dbReference type="ChEBI" id="CHEBI:58272"/>
        <dbReference type="ChEBI" id="CHEBI:58289"/>
    </reaction>
</comment>
<comment type="pathway">
    <text evidence="1">Carbohydrate degradation; glycolysis; pyruvate from D-glyceraldehyde 3-phosphate: step 3/5.</text>
</comment>
<comment type="similarity">
    <text evidence="1">Belongs to the phosphoglycerate mutase family. GpmB subfamily.</text>
</comment>
<sequence>MLQVYLVRHGETLWNAARRIQGQSDSPLTEIGIRQAHLVAQRVRNQGITHIISSDLGRTQQTAKIIADACGLTMVTDPRLRELNMGVLENRPIDSLTPEEEQWRKQMVNGTEGARIPEGESMTELGRRMHAALDSCLELPAGSKPLLVSHGMALGCLLSTLLGLPAHAERRLRLRNCSLSRVDYQESPWLASGWVIESAGDTAHLDMPALDELQR</sequence>
<gene>
    <name evidence="1" type="primary">gpmB</name>
    <name type="ordered locus">YPA_4046</name>
</gene>
<keyword id="KW-0324">Glycolysis</keyword>
<keyword id="KW-0413">Isomerase</keyword>
<organism>
    <name type="scientific">Yersinia pestis bv. Antiqua (strain Antiqua)</name>
    <dbReference type="NCBI Taxonomy" id="360102"/>
    <lineage>
        <taxon>Bacteria</taxon>
        <taxon>Pseudomonadati</taxon>
        <taxon>Pseudomonadota</taxon>
        <taxon>Gammaproteobacteria</taxon>
        <taxon>Enterobacterales</taxon>
        <taxon>Yersiniaceae</taxon>
        <taxon>Yersinia</taxon>
    </lineage>
</organism>
<dbReference type="EC" id="5.4.2.-" evidence="1"/>
<dbReference type="EMBL" id="CP000308">
    <property type="protein sequence ID" value="ABG16007.1"/>
    <property type="molecule type" value="Genomic_DNA"/>
</dbReference>
<dbReference type="RefSeq" id="WP_002209230.1">
    <property type="nucleotide sequence ID" value="NZ_CP009906.1"/>
</dbReference>
<dbReference type="SMR" id="Q1C0L5"/>
<dbReference type="GeneID" id="57974154"/>
<dbReference type="KEGG" id="ypa:YPA_4046"/>
<dbReference type="UniPathway" id="UPA00109">
    <property type="reaction ID" value="UER00186"/>
</dbReference>
<dbReference type="Proteomes" id="UP000001971">
    <property type="component" value="Chromosome"/>
</dbReference>
<dbReference type="GO" id="GO:0005737">
    <property type="term" value="C:cytoplasm"/>
    <property type="evidence" value="ECO:0007669"/>
    <property type="project" value="TreeGrafter"/>
</dbReference>
<dbReference type="GO" id="GO:0016791">
    <property type="term" value="F:phosphatase activity"/>
    <property type="evidence" value="ECO:0007669"/>
    <property type="project" value="TreeGrafter"/>
</dbReference>
<dbReference type="GO" id="GO:0004619">
    <property type="term" value="F:phosphoglycerate mutase activity"/>
    <property type="evidence" value="ECO:0007669"/>
    <property type="project" value="UniProtKB-UniRule"/>
</dbReference>
<dbReference type="GO" id="GO:0006096">
    <property type="term" value="P:glycolytic process"/>
    <property type="evidence" value="ECO:0007669"/>
    <property type="project" value="UniProtKB-UniRule"/>
</dbReference>
<dbReference type="CDD" id="cd07067">
    <property type="entry name" value="HP_PGM_like"/>
    <property type="match status" value="1"/>
</dbReference>
<dbReference type="Gene3D" id="3.40.50.1240">
    <property type="entry name" value="Phosphoglycerate mutase-like"/>
    <property type="match status" value="1"/>
</dbReference>
<dbReference type="HAMAP" id="MF_01040">
    <property type="entry name" value="PGAM_GpmB"/>
    <property type="match status" value="1"/>
</dbReference>
<dbReference type="InterPro" id="IPR013078">
    <property type="entry name" value="His_Pase_superF_clade-1"/>
</dbReference>
<dbReference type="InterPro" id="IPR029033">
    <property type="entry name" value="His_PPase_superfam"/>
</dbReference>
<dbReference type="InterPro" id="IPR001345">
    <property type="entry name" value="PG/BPGM_mutase_AS"/>
</dbReference>
<dbReference type="InterPro" id="IPR050275">
    <property type="entry name" value="PGM_Phosphatase"/>
</dbReference>
<dbReference type="InterPro" id="IPR023086">
    <property type="entry name" value="Phosphoglycerate_mutase_GpmB"/>
</dbReference>
<dbReference type="NCBIfam" id="NF002901">
    <property type="entry name" value="PRK03482.1"/>
    <property type="match status" value="1"/>
</dbReference>
<dbReference type="PANTHER" id="PTHR48100">
    <property type="entry name" value="BROAD-SPECIFICITY PHOSPHATASE YOR283W-RELATED"/>
    <property type="match status" value="1"/>
</dbReference>
<dbReference type="PANTHER" id="PTHR48100:SF1">
    <property type="entry name" value="HISTIDINE PHOSPHATASE FAMILY PROTEIN-RELATED"/>
    <property type="match status" value="1"/>
</dbReference>
<dbReference type="Pfam" id="PF00300">
    <property type="entry name" value="His_Phos_1"/>
    <property type="match status" value="1"/>
</dbReference>
<dbReference type="SMART" id="SM00855">
    <property type="entry name" value="PGAM"/>
    <property type="match status" value="1"/>
</dbReference>
<dbReference type="SUPFAM" id="SSF53254">
    <property type="entry name" value="Phosphoglycerate mutase-like"/>
    <property type="match status" value="1"/>
</dbReference>
<dbReference type="PROSITE" id="PS00175">
    <property type="entry name" value="PG_MUTASE"/>
    <property type="match status" value="1"/>
</dbReference>
<accession>Q1C0L5</accession>
<reference key="1">
    <citation type="journal article" date="2006" name="J. Bacteriol.">
        <title>Complete genome sequence of Yersinia pestis strains Antiqua and Nepal516: evidence of gene reduction in an emerging pathogen.</title>
        <authorList>
            <person name="Chain P.S.G."/>
            <person name="Hu P."/>
            <person name="Malfatti S.A."/>
            <person name="Radnedge L."/>
            <person name="Larimer F."/>
            <person name="Vergez L.M."/>
            <person name="Worsham P."/>
            <person name="Chu M.C."/>
            <person name="Andersen G.L."/>
        </authorList>
    </citation>
    <scope>NUCLEOTIDE SEQUENCE [LARGE SCALE GENOMIC DNA]</scope>
    <source>
        <strain>Antiqua</strain>
    </source>
</reference>
<proteinExistence type="inferred from homology"/>
<name>GPMB_YERPA</name>
<feature type="chain" id="PRO_1000064136" description="Probable phosphoglycerate mutase GpmB">
    <location>
        <begin position="1"/>
        <end position="215"/>
    </location>
</feature>
<feature type="active site" description="Tele-phosphohistidine intermediate" evidence="1">
    <location>
        <position position="9"/>
    </location>
</feature>
<feature type="active site" description="Proton donor/acceptor" evidence="1">
    <location>
        <position position="82"/>
    </location>
</feature>
<feature type="binding site" evidence="1">
    <location>
        <begin position="8"/>
        <end position="15"/>
    </location>
    <ligand>
        <name>substrate</name>
    </ligand>
</feature>
<feature type="binding site" evidence="1">
    <location>
        <begin position="21"/>
        <end position="22"/>
    </location>
    <ligand>
        <name>substrate</name>
    </ligand>
</feature>
<feature type="binding site" evidence="1">
    <location>
        <position position="58"/>
    </location>
    <ligand>
        <name>substrate</name>
    </ligand>
</feature>
<feature type="binding site" evidence="1">
    <location>
        <begin position="82"/>
        <end position="85"/>
    </location>
    <ligand>
        <name>substrate</name>
    </ligand>
</feature>
<feature type="binding site" evidence="1">
    <location>
        <begin position="151"/>
        <end position="152"/>
    </location>
    <ligand>
        <name>substrate</name>
    </ligand>
</feature>
<feature type="site" description="Transition state stabilizer" evidence="1">
    <location>
        <position position="150"/>
    </location>
</feature>